<accession>Q4UK16</accession>
<evidence type="ECO:0000255" key="1">
    <source>
        <dbReference type="HAMAP-Rule" id="MF_01346"/>
    </source>
</evidence>
<comment type="function">
    <text evidence="1">Produces ATP from ADP in the presence of a proton gradient across the membrane. The alpha chain is a regulatory subunit.</text>
</comment>
<comment type="catalytic activity">
    <reaction evidence="1">
        <text>ATP + H2O + 4 H(+)(in) = ADP + phosphate + 5 H(+)(out)</text>
        <dbReference type="Rhea" id="RHEA:57720"/>
        <dbReference type="ChEBI" id="CHEBI:15377"/>
        <dbReference type="ChEBI" id="CHEBI:15378"/>
        <dbReference type="ChEBI" id="CHEBI:30616"/>
        <dbReference type="ChEBI" id="CHEBI:43474"/>
        <dbReference type="ChEBI" id="CHEBI:456216"/>
        <dbReference type="EC" id="7.1.2.2"/>
    </reaction>
</comment>
<comment type="subunit">
    <text evidence="1">F-type ATPases have 2 components, CF(1) - the catalytic core - and CF(0) - the membrane proton channel. CF(1) has five subunits: alpha(3), beta(3), gamma(1), delta(1), epsilon(1). CF(0) has three main subunits: a(1), b(2) and c(9-12). The alpha and beta chains form an alternating ring which encloses part of the gamma chain. CF(1) is attached to CF(0) by a central stalk formed by the gamma and epsilon chains, while a peripheral stalk is formed by the delta and b chains.</text>
</comment>
<comment type="subcellular location">
    <subcellularLocation>
        <location evidence="1">Cell inner membrane</location>
        <topology evidence="1">Peripheral membrane protein</topology>
    </subcellularLocation>
</comment>
<comment type="similarity">
    <text evidence="1">Belongs to the ATPase alpha/beta chains family.</text>
</comment>
<name>ATPA_RICFE</name>
<organism>
    <name type="scientific">Rickettsia felis (strain ATCC VR-1525 / URRWXCal2)</name>
    <name type="common">Rickettsia azadi</name>
    <dbReference type="NCBI Taxonomy" id="315456"/>
    <lineage>
        <taxon>Bacteria</taxon>
        <taxon>Pseudomonadati</taxon>
        <taxon>Pseudomonadota</taxon>
        <taxon>Alphaproteobacteria</taxon>
        <taxon>Rickettsiales</taxon>
        <taxon>Rickettsiaceae</taxon>
        <taxon>Rickettsieae</taxon>
        <taxon>Rickettsia</taxon>
        <taxon>spotted fever group</taxon>
    </lineage>
</organism>
<gene>
    <name evidence="1" type="primary">atpA</name>
    <name type="ordered locus">RF_1268</name>
</gene>
<keyword id="KW-0066">ATP synthesis</keyword>
<keyword id="KW-0067">ATP-binding</keyword>
<keyword id="KW-0997">Cell inner membrane</keyword>
<keyword id="KW-1003">Cell membrane</keyword>
<keyword id="KW-0139">CF(1)</keyword>
<keyword id="KW-0375">Hydrogen ion transport</keyword>
<keyword id="KW-0406">Ion transport</keyword>
<keyword id="KW-0472">Membrane</keyword>
<keyword id="KW-0547">Nucleotide-binding</keyword>
<keyword id="KW-1278">Translocase</keyword>
<keyword id="KW-0813">Transport</keyword>
<protein>
    <recommendedName>
        <fullName evidence="1">ATP synthase subunit alpha</fullName>
        <ecNumber evidence="1">7.1.2.2</ecNumber>
    </recommendedName>
    <alternativeName>
        <fullName evidence="1">ATP synthase F1 sector subunit alpha</fullName>
    </alternativeName>
    <alternativeName>
        <fullName evidence="1">F-ATPase subunit alpha</fullName>
    </alternativeName>
</protein>
<reference key="1">
    <citation type="journal article" date="2005" name="PLoS Biol.">
        <title>The genome sequence of Rickettsia felis identifies the first putative conjugative plasmid in an obligate intracellular parasite.</title>
        <authorList>
            <person name="Ogata H."/>
            <person name="Renesto P."/>
            <person name="Audic S."/>
            <person name="Robert C."/>
            <person name="Blanc G."/>
            <person name="Fournier P.-E."/>
            <person name="Parinello H."/>
            <person name="Claverie J.-M."/>
            <person name="Raoult D."/>
        </authorList>
    </citation>
    <scope>NUCLEOTIDE SEQUENCE [LARGE SCALE GENOMIC DNA]</scope>
    <source>
        <strain>ATCC VR-1525 / URRWXCal2</strain>
    </source>
</reference>
<sequence length="510" mass="56035">MKLKPIEVAEILQKEIANINCLSELEEVGQVISVGDGIAKIYGLANVKSGEVVEFKSGVKGLVLNLENDSVGAVIMGDDNQVQQGDNVKRTKEVLEVPIGKALLGRVVDALGNPIDGKGDIASKEYRHIEMKAPGIIERTSVSEPVQTGIKAIDSLIPIGRGQRELIIGDRQTGKTAIAVDTIINQKQAHSLTNESDKIYCIYVAIGQKRSSVAQIVKKLEDAGAMDYTIVVSATASEAAALQFIAPYSACSMGEYFRDNGMHALIIYDDLSKHAVAYRQISLLLRRPPGREAYPGDVFYLHSRLLERAAKMSEEKGSGSLTALPIIETQAGDVSAYIPTNVISITDGQIFLESELFYKGVRPAVNVGISVSRVGSAAQIKAMKQVAGSVKLELAQFRELESFSQFGSDLDPATKAQIDHGKRLVEILKQAQYHPFPVEEQIVSIYVGTKKYLNDVPLQKVKEFEDKMLTEIRLNKKDILESIKNEQRITEETEQKLKAFLENFVKEFVK</sequence>
<proteinExistence type="inferred from homology"/>
<dbReference type="EC" id="7.1.2.2" evidence="1"/>
<dbReference type="EMBL" id="CP000053">
    <property type="protein sequence ID" value="AAY62119.1"/>
    <property type="molecule type" value="Genomic_DNA"/>
</dbReference>
<dbReference type="SMR" id="Q4UK16"/>
<dbReference type="STRING" id="315456.RF_1268"/>
<dbReference type="KEGG" id="rfe:RF_1268"/>
<dbReference type="eggNOG" id="COG0056">
    <property type="taxonomic scope" value="Bacteria"/>
</dbReference>
<dbReference type="HOGENOM" id="CLU_010091_2_1_5"/>
<dbReference type="OrthoDB" id="9803053at2"/>
<dbReference type="Proteomes" id="UP000008548">
    <property type="component" value="Chromosome"/>
</dbReference>
<dbReference type="GO" id="GO:0005886">
    <property type="term" value="C:plasma membrane"/>
    <property type="evidence" value="ECO:0007669"/>
    <property type="project" value="UniProtKB-SubCell"/>
</dbReference>
<dbReference type="GO" id="GO:0045259">
    <property type="term" value="C:proton-transporting ATP synthase complex"/>
    <property type="evidence" value="ECO:0007669"/>
    <property type="project" value="UniProtKB-KW"/>
</dbReference>
<dbReference type="GO" id="GO:0043531">
    <property type="term" value="F:ADP binding"/>
    <property type="evidence" value="ECO:0007669"/>
    <property type="project" value="TreeGrafter"/>
</dbReference>
<dbReference type="GO" id="GO:0005524">
    <property type="term" value="F:ATP binding"/>
    <property type="evidence" value="ECO:0007669"/>
    <property type="project" value="UniProtKB-UniRule"/>
</dbReference>
<dbReference type="GO" id="GO:0046933">
    <property type="term" value="F:proton-transporting ATP synthase activity, rotational mechanism"/>
    <property type="evidence" value="ECO:0007669"/>
    <property type="project" value="UniProtKB-UniRule"/>
</dbReference>
<dbReference type="CDD" id="cd18113">
    <property type="entry name" value="ATP-synt_F1_alpha_C"/>
    <property type="match status" value="1"/>
</dbReference>
<dbReference type="CDD" id="cd18116">
    <property type="entry name" value="ATP-synt_F1_alpha_N"/>
    <property type="match status" value="1"/>
</dbReference>
<dbReference type="CDD" id="cd01132">
    <property type="entry name" value="F1-ATPase_alpha_CD"/>
    <property type="match status" value="1"/>
</dbReference>
<dbReference type="FunFam" id="1.20.150.20:FF:000001">
    <property type="entry name" value="ATP synthase subunit alpha"/>
    <property type="match status" value="1"/>
</dbReference>
<dbReference type="FunFam" id="2.40.30.20:FF:000001">
    <property type="entry name" value="ATP synthase subunit alpha"/>
    <property type="match status" value="1"/>
</dbReference>
<dbReference type="FunFam" id="3.40.50.300:FF:002432">
    <property type="entry name" value="ATP synthase subunit alpha, mitochondrial"/>
    <property type="match status" value="1"/>
</dbReference>
<dbReference type="Gene3D" id="2.40.30.20">
    <property type="match status" value="1"/>
</dbReference>
<dbReference type="Gene3D" id="1.20.150.20">
    <property type="entry name" value="ATP synthase alpha/beta chain, C-terminal domain"/>
    <property type="match status" value="1"/>
</dbReference>
<dbReference type="Gene3D" id="3.40.50.300">
    <property type="entry name" value="P-loop containing nucleotide triphosphate hydrolases"/>
    <property type="match status" value="1"/>
</dbReference>
<dbReference type="HAMAP" id="MF_01346">
    <property type="entry name" value="ATP_synth_alpha_bact"/>
    <property type="match status" value="1"/>
</dbReference>
<dbReference type="InterPro" id="IPR023366">
    <property type="entry name" value="ATP_synth_asu-like_sf"/>
</dbReference>
<dbReference type="InterPro" id="IPR000793">
    <property type="entry name" value="ATP_synth_asu_C"/>
</dbReference>
<dbReference type="InterPro" id="IPR038376">
    <property type="entry name" value="ATP_synth_asu_C_sf"/>
</dbReference>
<dbReference type="InterPro" id="IPR033732">
    <property type="entry name" value="ATP_synth_F1_a_nt-bd_dom"/>
</dbReference>
<dbReference type="InterPro" id="IPR005294">
    <property type="entry name" value="ATP_synth_F1_asu"/>
</dbReference>
<dbReference type="InterPro" id="IPR020003">
    <property type="entry name" value="ATPase_a/bsu_AS"/>
</dbReference>
<dbReference type="InterPro" id="IPR004100">
    <property type="entry name" value="ATPase_F1/V1/A1_a/bsu_N"/>
</dbReference>
<dbReference type="InterPro" id="IPR036121">
    <property type="entry name" value="ATPase_F1/V1/A1_a/bsu_N_sf"/>
</dbReference>
<dbReference type="InterPro" id="IPR000194">
    <property type="entry name" value="ATPase_F1/V1/A1_a/bsu_nucl-bd"/>
</dbReference>
<dbReference type="InterPro" id="IPR027417">
    <property type="entry name" value="P-loop_NTPase"/>
</dbReference>
<dbReference type="NCBIfam" id="TIGR00962">
    <property type="entry name" value="atpA"/>
    <property type="match status" value="1"/>
</dbReference>
<dbReference type="NCBIfam" id="NF009884">
    <property type="entry name" value="PRK13343.1"/>
    <property type="match status" value="1"/>
</dbReference>
<dbReference type="PANTHER" id="PTHR48082">
    <property type="entry name" value="ATP SYNTHASE SUBUNIT ALPHA, MITOCHONDRIAL"/>
    <property type="match status" value="1"/>
</dbReference>
<dbReference type="PANTHER" id="PTHR48082:SF2">
    <property type="entry name" value="ATP SYNTHASE SUBUNIT ALPHA, MITOCHONDRIAL"/>
    <property type="match status" value="1"/>
</dbReference>
<dbReference type="Pfam" id="PF00006">
    <property type="entry name" value="ATP-synt_ab"/>
    <property type="match status" value="1"/>
</dbReference>
<dbReference type="Pfam" id="PF00306">
    <property type="entry name" value="ATP-synt_ab_C"/>
    <property type="match status" value="1"/>
</dbReference>
<dbReference type="Pfam" id="PF02874">
    <property type="entry name" value="ATP-synt_ab_N"/>
    <property type="match status" value="1"/>
</dbReference>
<dbReference type="PIRSF" id="PIRSF039088">
    <property type="entry name" value="F_ATPase_subunit_alpha"/>
    <property type="match status" value="1"/>
</dbReference>
<dbReference type="SUPFAM" id="SSF47917">
    <property type="entry name" value="C-terminal domain of alpha and beta subunits of F1 ATP synthase"/>
    <property type="match status" value="1"/>
</dbReference>
<dbReference type="SUPFAM" id="SSF50615">
    <property type="entry name" value="N-terminal domain of alpha and beta subunits of F1 ATP synthase"/>
    <property type="match status" value="1"/>
</dbReference>
<dbReference type="SUPFAM" id="SSF52540">
    <property type="entry name" value="P-loop containing nucleoside triphosphate hydrolases"/>
    <property type="match status" value="1"/>
</dbReference>
<dbReference type="PROSITE" id="PS00152">
    <property type="entry name" value="ATPASE_ALPHA_BETA"/>
    <property type="match status" value="1"/>
</dbReference>
<feature type="chain" id="PRO_0000238344" description="ATP synthase subunit alpha">
    <location>
        <begin position="1"/>
        <end position="510"/>
    </location>
</feature>
<feature type="binding site" evidence="1">
    <location>
        <begin position="169"/>
        <end position="176"/>
    </location>
    <ligand>
        <name>ATP</name>
        <dbReference type="ChEBI" id="CHEBI:30616"/>
    </ligand>
</feature>
<feature type="site" description="Required for activity" evidence="1">
    <location>
        <position position="370"/>
    </location>
</feature>